<accession>O73925</accession>
<evidence type="ECO:0000250" key="1">
    <source>
        <dbReference type="UniProtKB" id="P51787"/>
    </source>
</evidence>
<evidence type="ECO:0000250" key="2">
    <source>
        <dbReference type="UniProtKB" id="P97414"/>
    </source>
</evidence>
<evidence type="ECO:0000250" key="3">
    <source>
        <dbReference type="UniProtKB" id="Q9Z0N7"/>
    </source>
</evidence>
<evidence type="ECO:0000256" key="4">
    <source>
        <dbReference type="SAM" id="MobiDB-lite"/>
    </source>
</evidence>
<evidence type="ECO:0000303" key="5">
    <source>
    </source>
</evidence>
<evidence type="ECO:0000305" key="6"/>
<dbReference type="EMBL" id="AJ223714">
    <property type="protein sequence ID" value="CAA11526.1"/>
    <property type="molecule type" value="mRNA"/>
</dbReference>
<dbReference type="SMR" id="O73925"/>
<dbReference type="GO" id="GO:0016323">
    <property type="term" value="C:basolateral plasma membrane"/>
    <property type="evidence" value="ECO:0000250"/>
    <property type="project" value="UniProtKB"/>
</dbReference>
<dbReference type="GO" id="GO:0005737">
    <property type="term" value="C:cytoplasm"/>
    <property type="evidence" value="ECO:0000250"/>
    <property type="project" value="UniProtKB"/>
</dbReference>
<dbReference type="GO" id="GO:0030659">
    <property type="term" value="C:cytoplasmic vesicle membrane"/>
    <property type="evidence" value="ECO:0007669"/>
    <property type="project" value="UniProtKB-SubCell"/>
</dbReference>
<dbReference type="GO" id="GO:0005783">
    <property type="term" value="C:endoplasmic reticulum"/>
    <property type="evidence" value="ECO:0007669"/>
    <property type="project" value="UniProtKB-SubCell"/>
</dbReference>
<dbReference type="GO" id="GO:0045121">
    <property type="term" value="C:membrane raft"/>
    <property type="evidence" value="ECO:0000250"/>
    <property type="project" value="UniProtKB"/>
</dbReference>
<dbReference type="GO" id="GO:0034702">
    <property type="term" value="C:monoatomic ion channel complex"/>
    <property type="evidence" value="ECO:0000250"/>
    <property type="project" value="UniProtKB"/>
</dbReference>
<dbReference type="GO" id="GO:0005886">
    <property type="term" value="C:plasma membrane"/>
    <property type="evidence" value="ECO:0000250"/>
    <property type="project" value="UniProtKB"/>
</dbReference>
<dbReference type="GO" id="GO:0008076">
    <property type="term" value="C:voltage-gated potassium channel complex"/>
    <property type="evidence" value="ECO:0007669"/>
    <property type="project" value="InterPro"/>
</dbReference>
<dbReference type="GO" id="GO:0005516">
    <property type="term" value="F:calmodulin binding"/>
    <property type="evidence" value="ECO:0007669"/>
    <property type="project" value="UniProtKB-KW"/>
</dbReference>
<dbReference type="GO" id="GO:0005251">
    <property type="term" value="F:delayed rectifier potassium channel activity"/>
    <property type="evidence" value="ECO:0000250"/>
    <property type="project" value="UniProtKB"/>
</dbReference>
<dbReference type="GO" id="GO:0015271">
    <property type="term" value="F:outward rectifier potassium channel activity"/>
    <property type="evidence" value="ECO:0000250"/>
    <property type="project" value="UniProtKB"/>
</dbReference>
<dbReference type="GO" id="GO:0005546">
    <property type="term" value="F:phosphatidylinositol-4,5-bisphosphate binding"/>
    <property type="evidence" value="ECO:0000250"/>
    <property type="project" value="UniProtKB"/>
</dbReference>
<dbReference type="GO" id="GO:0005249">
    <property type="term" value="F:voltage-gated potassium channel activity"/>
    <property type="evidence" value="ECO:0000250"/>
    <property type="project" value="UniProtKB"/>
</dbReference>
<dbReference type="GO" id="GO:0048839">
    <property type="term" value="P:inner ear development"/>
    <property type="evidence" value="ECO:0000250"/>
    <property type="project" value="UniProtKB"/>
</dbReference>
<dbReference type="GO" id="GO:0050892">
    <property type="term" value="P:intestinal absorption"/>
    <property type="evidence" value="ECO:0000250"/>
    <property type="project" value="UniProtKB"/>
</dbReference>
<dbReference type="GO" id="GO:0086009">
    <property type="term" value="P:membrane repolarization"/>
    <property type="evidence" value="ECO:0000250"/>
    <property type="project" value="UniProtKB"/>
</dbReference>
<dbReference type="GO" id="GO:0060453">
    <property type="term" value="P:regulation of gastric acid secretion"/>
    <property type="evidence" value="ECO:0000250"/>
    <property type="project" value="UniProtKB"/>
</dbReference>
<dbReference type="GO" id="GO:0070293">
    <property type="term" value="P:renal absorption"/>
    <property type="evidence" value="ECO:0000250"/>
    <property type="project" value="UniProtKB"/>
</dbReference>
<dbReference type="FunFam" id="1.10.287.70:FF:000113">
    <property type="entry name" value="Potassium voltage-gated channel subfamily KQT member 1"/>
    <property type="match status" value="1"/>
</dbReference>
<dbReference type="FunFam" id="1.20.120.350:FF:000017">
    <property type="entry name" value="potassium voltage-gated channel subfamily KQT member 1"/>
    <property type="match status" value="1"/>
</dbReference>
<dbReference type="Gene3D" id="1.10.287.70">
    <property type="match status" value="1"/>
</dbReference>
<dbReference type="Gene3D" id="6.10.140.1910">
    <property type="match status" value="2"/>
</dbReference>
<dbReference type="Gene3D" id="1.20.120.350">
    <property type="entry name" value="Voltage-gated potassium channels. Chain C"/>
    <property type="match status" value="1"/>
</dbReference>
<dbReference type="InterPro" id="IPR005821">
    <property type="entry name" value="Ion_trans_dom"/>
</dbReference>
<dbReference type="InterPro" id="IPR003937">
    <property type="entry name" value="K_chnl_volt-dep_KCNQ"/>
</dbReference>
<dbReference type="InterPro" id="IPR013821">
    <property type="entry name" value="K_chnl_volt-dep_KCNQ_C"/>
</dbReference>
<dbReference type="InterPro" id="IPR005827">
    <property type="entry name" value="K_chnl_volt-dep_KCQN1"/>
</dbReference>
<dbReference type="InterPro" id="IPR027359">
    <property type="entry name" value="Volt_channel_dom_sf"/>
</dbReference>
<dbReference type="PANTHER" id="PTHR47735:SF14">
    <property type="entry name" value="POTASSIUM VOLTAGE-GATED CHANNEL SUBFAMILY KQT MEMBER 1"/>
    <property type="match status" value="1"/>
</dbReference>
<dbReference type="PANTHER" id="PTHR47735">
    <property type="entry name" value="POTASSIUM VOLTAGE-GATED CHANNEL SUBFAMILY KQT MEMBER 4"/>
    <property type="match status" value="1"/>
</dbReference>
<dbReference type="Pfam" id="PF00520">
    <property type="entry name" value="Ion_trans"/>
    <property type="match status" value="1"/>
</dbReference>
<dbReference type="Pfam" id="PF03520">
    <property type="entry name" value="KCNQ_channel"/>
    <property type="match status" value="1"/>
</dbReference>
<dbReference type="PRINTS" id="PR00169">
    <property type="entry name" value="KCHANNEL"/>
</dbReference>
<dbReference type="PRINTS" id="PR01460">
    <property type="entry name" value="KCNQ1CHANNEL"/>
</dbReference>
<dbReference type="PRINTS" id="PR01459">
    <property type="entry name" value="KCNQCHANNEL"/>
</dbReference>
<dbReference type="SUPFAM" id="SSF81324">
    <property type="entry name" value="Voltage-gated potassium channels"/>
    <property type="match status" value="1"/>
</dbReference>
<reference key="1">
    <citation type="journal article" date="1999" name="Pflugers Arch.">
        <title>Molecular and functional characterization of s-KCNQ1 potassium channel from rectal gland of Squalus acanthias.</title>
        <authorList>
            <person name="Waldegger S."/>
            <person name="Fakler B."/>
            <person name="Bleich M."/>
            <person name="Barth P."/>
            <person name="Hopf A."/>
            <person name="Schulte U."/>
            <person name="Busch A.E."/>
            <person name="Aller S.G."/>
            <person name="Forrest J.N. Jr."/>
            <person name="Greger R."/>
            <person name="Lang F."/>
        </authorList>
    </citation>
    <scope>NUCLEOTIDE SEQUENCE [MRNA]</scope>
    <source>
        <tissue>Rectal gland</tissue>
    </source>
</reference>
<feature type="chain" id="PRO_0000054029" description="Potassium voltage-gated channel subfamily KQT member 1">
    <location>
        <begin position="1"/>
        <end position="660"/>
    </location>
</feature>
<feature type="topological domain" description="Cytoplasmic" evidence="6">
    <location>
        <begin position="1"/>
        <end position="113"/>
    </location>
</feature>
<feature type="transmembrane region" description="Helical; Name=Segment S1" evidence="1">
    <location>
        <begin position="114"/>
        <end position="135"/>
    </location>
</feature>
<feature type="topological domain" description="Extracellular" evidence="6">
    <location>
        <begin position="136"/>
        <end position="146"/>
    </location>
</feature>
<feature type="transmembrane region" description="Helical; Name=Segment S2" evidence="1">
    <location>
        <begin position="147"/>
        <end position="169"/>
    </location>
</feature>
<feature type="topological domain" description="Cytoplasmic" evidence="6">
    <location>
        <begin position="170"/>
        <end position="185"/>
    </location>
</feature>
<feature type="transmembrane region" description="Helical; Name=Segment S3" evidence="1">
    <location>
        <begin position="186"/>
        <end position="211"/>
    </location>
</feature>
<feature type="topological domain" description="Extracellular" evidence="6">
    <location>
        <begin position="212"/>
        <end position="219"/>
    </location>
</feature>
<feature type="transmembrane region" description="Helical; Voltage-sensor; Name=Segment S4" evidence="1">
    <location>
        <begin position="220"/>
        <end position="235"/>
    </location>
</feature>
<feature type="topological domain" description="Cytoplasmic" evidence="6">
    <location>
        <begin position="236"/>
        <end position="253"/>
    </location>
</feature>
<feature type="transmembrane region" description="Helical; Name=Segment S5" evidence="1">
    <location>
        <begin position="254"/>
        <end position="276"/>
    </location>
</feature>
<feature type="topological domain" description="Extracellular" evidence="6">
    <location>
        <begin position="277"/>
        <end position="292"/>
    </location>
</feature>
<feature type="intramembrane region" description="Pore-forming; Name=Segment H5" evidence="1">
    <location>
        <begin position="293"/>
        <end position="313"/>
    </location>
</feature>
<feature type="topological domain" description="Extracellular" evidence="6">
    <location>
        <begin position="314"/>
        <end position="315"/>
    </location>
</feature>
<feature type="transmembrane region" description="Helical; Name=Segment S6" evidence="1">
    <location>
        <begin position="316"/>
        <end position="341"/>
    </location>
</feature>
<feature type="topological domain" description="Cytoplasmic" evidence="6">
    <location>
        <begin position="342"/>
        <end position="660"/>
    </location>
</feature>
<feature type="region of interest" description="Disordered" evidence="4">
    <location>
        <begin position="1"/>
        <end position="67"/>
    </location>
</feature>
<feature type="region of interest" description="Disordered" evidence="4">
    <location>
        <begin position="399"/>
        <end position="426"/>
    </location>
</feature>
<feature type="coiled-coil region" evidence="1">
    <location>
        <begin position="579"/>
        <end position="615"/>
    </location>
</feature>
<feature type="compositionally biased region" description="Polar residues" evidence="4">
    <location>
        <begin position="1"/>
        <end position="18"/>
    </location>
</feature>
<feature type="compositionally biased region" description="Basic and acidic residues" evidence="4">
    <location>
        <begin position="53"/>
        <end position="67"/>
    </location>
</feature>
<feature type="compositionally biased region" description="Basic residues" evidence="4">
    <location>
        <begin position="403"/>
        <end position="415"/>
    </location>
</feature>
<feature type="binding site" evidence="1">
    <location>
        <position position="237"/>
    </location>
    <ligand>
        <name>a 1,2-diacyl-sn-glycero-3-phospho-(1D-myo-inositol-4,5-bisphosphate)</name>
        <dbReference type="ChEBI" id="CHEBI:58456"/>
    </ligand>
</feature>
<name>KCNQ1_SQUAC</name>
<proteinExistence type="evidence at transcript level"/>
<gene>
    <name evidence="5" type="primary">KCNQ1</name>
</gene>
<sequence length="660" mass="74687">MSSEVKSRWSGSGSQKSGTARKPTMLEMAENAASRHYEPVPLPLQRSNSPDSSTDKNPESRAADSRAEVIINPDIPPKAIALPLSRYRGRNPFFSKVNIQGRTYNFLERPTGWKCFIYHFTVFLIVLVCLIFSVMSTIEQYHYFANRALVWMEIVLVVFFGTEYIVRLWSAGCRSKYVGFWGRLRFARKPISIIDLIVVVASVIVLCVGSNGQVFATSAIRGIRFLQILRMLHVDRQGGTWRLLGSVVFIHRQELITTLYIGFLGLIFSSYFVYLAEKDAVDDSGSQQFGSYADALWWGVVTVTTIGYGDKVPQTWIGRTIASCFSVFAISFFALPAGILGSGFALKVQQKQRQKHFNRQIPAAASLIQTSWRCHAAENHESATWKMYVRQPTKFYVASPSPKTKKSVGKRKKLKTDKDNGLNSEKSLNVPNITYDHVVDKDDRKFENSNIDGYDSSVKKSLGILDVNSGALSRANSYADDLDFIEGEPVLAPITHVSQLRESHRVTVKVIRRMQYFVAKKKFQQARKPYDVRDVIEQYSQGHLNLMVRIKELQRRLDQSLGKPTMFLSVSEKSQDRGKNTIGARLNRVEEKFVHMDQKLNTITDMLHHLVAHQQGHPHPQTQPQAQGTVVQAVASTHSSLPSYEQLTVRRKDQDNQPDL</sequence>
<keyword id="KW-0112">Calmodulin-binding</keyword>
<keyword id="KW-1003">Cell membrane</keyword>
<keyword id="KW-0175">Coiled coil</keyword>
<keyword id="KW-0968">Cytoplasmic vesicle</keyword>
<keyword id="KW-0256">Endoplasmic reticulum</keyword>
<keyword id="KW-0407">Ion channel</keyword>
<keyword id="KW-0406">Ion transport</keyword>
<keyword id="KW-0472">Membrane</keyword>
<keyword id="KW-0630">Potassium</keyword>
<keyword id="KW-0631">Potassium channel</keyword>
<keyword id="KW-0633">Potassium transport</keyword>
<keyword id="KW-0812">Transmembrane</keyword>
<keyword id="KW-1133">Transmembrane helix</keyword>
<keyword id="KW-0813">Transport</keyword>
<keyword id="KW-0851">Voltage-gated channel</keyword>
<organism>
    <name type="scientific">Squalus acanthias</name>
    <name type="common">Spiny dogfish</name>
    <dbReference type="NCBI Taxonomy" id="7797"/>
    <lineage>
        <taxon>Eukaryota</taxon>
        <taxon>Metazoa</taxon>
        <taxon>Chordata</taxon>
        <taxon>Craniata</taxon>
        <taxon>Vertebrata</taxon>
        <taxon>Chondrichthyes</taxon>
        <taxon>Elasmobranchii</taxon>
        <taxon>Squalomorphii</taxon>
        <taxon>Squaliformes</taxon>
        <taxon>Squalidae</taxon>
        <taxon>Squalus</taxon>
    </lineage>
</organism>
<protein>
    <recommendedName>
        <fullName evidence="1">Potassium voltage-gated channel subfamily KQT member 1</fullName>
    </recommendedName>
    <alternativeName>
        <fullName evidence="1">IKs producing slow voltage-gated potassium channel subunit alpha KvLQT1</fullName>
    </alternativeName>
    <alternativeName>
        <fullName evidence="1">KQT-like 1</fullName>
    </alternativeName>
    <alternativeName>
        <fullName evidence="1">Voltage-gated potassium channel subunit Kv7.1</fullName>
    </alternativeName>
</protein>
<comment type="function">
    <text evidence="1 2 3">Pore-forming subunit of the voltage-gated potassium (Kv) channel involved in the regulation of cardiomyocyte excitability and important in normal development and functions of myocardium, inner ear, stomach and colon (By similarity). Associates with KCNE beta subunits that modulates current kinetics (By similarity). Induces a voltage-dependent by rapidly activating and slowly deactivating potassium-selective outward current (By similarity). Also promotes a delayed voltage activated potassium current showing outward rectification characteristic (By similarity). During beta-adrenergic receptor stimulation participates in cardiac repolarization by associating with KCNE1 to form the I(Ks) cardiac potassium current that increases the amplitude and slows down the activation kinetics of outward potassium current I(Ks) (By similarity). When associated with KCNE3, forms the potassium channel that is important for cyclic AMP-stimulated intestinal secretion of chloride ions (By similarity). When associated with KCNE2, forms a heterooligomer complex leading to currents with an apparently instantaneous activation, a rapid deactivation process and a linear current-voltage relationship and decreases the amplitude of the outward current (By similarity). When associated with KCNE4, inhibits voltage-gated potassium channel activity (By similarity). When associated with KCNE5, this complex only conducts current upon strong and continued depolarization (By similarity).</text>
</comment>
<comment type="catalytic activity">
    <reaction evidence="1">
        <text>K(+)(in) = K(+)(out)</text>
        <dbReference type="Rhea" id="RHEA:29463"/>
        <dbReference type="ChEBI" id="CHEBI:29103"/>
    </reaction>
</comment>
<comment type="activity regulation">
    <text evidence="1">PIP2 molecule is essential to activate KCNQ channels by inducing the coupling of the voltage-sensing domain (VSD) and the pore-forming domain (PD). Upon channel activation, PIP2 disrupts the VSD-calmodulin/CALM interactions, causing the release of CALM from the VSD which triggers the opening of the gate. Calcium potentiates KCNQ1 channel current through calcium-bound CALM. Calcium-bound CALM competes with PIP2 to stabilize the channel open state.</text>
</comment>
<comment type="subunit">
    <text evidence="1">Tetramer. Heterotetramer with KCNE1; targets to the membrane raft. Interacts (via C-terminus) with CALM; forms a heterotetramer in a calcium-independent manner. Interacts with KCNE2; form a heterooligomer complex that targets to the membrane raft and leading to currents with an apparently instantaneous activation, a rapid deactivation process and a linear current-voltage relationship and decreases the amplitude of the outward current. Interacts with KCNE3; four KCNE3 molecules are bound to one KCNQ1 tetramer (4:4 KCNQ1:KCNE3 stoichiometry); alters membrane raft localization; affects KCNQ1 structure and gating properties. Interacts with KCNE4; impairs KCNQ1 localization in lipid rafts and inhibits voltage-gated potassium channel activity. Interacts with KCNE5; impairs KCNQ1 localization in lipid rafts and only conducts current upon strong and continued depolarization.</text>
</comment>
<comment type="subcellular location">
    <subcellularLocation>
        <location evidence="1">Cell membrane</location>
        <topology evidence="1">Multi-pass membrane protein</topology>
    </subcellularLocation>
    <subcellularLocation>
        <location evidence="1">Cytoplasmic vesicle membrane</location>
    </subcellularLocation>
    <subcellularLocation>
        <location evidence="1">Membrane raft</location>
    </subcellularLocation>
    <subcellularLocation>
        <location evidence="1">Endoplasmic reticulum</location>
    </subcellularLocation>
    <subcellularLocation>
        <location evidence="1">Basolateral cell membrane</location>
    </subcellularLocation>
</comment>
<comment type="tissue specificity">
    <text>Expressed only in rectal gland and heart. Faintly expressed in intestine. Undetectable in kidney, brain, testis, liver and gills.</text>
</comment>
<comment type="domain">
    <text evidence="1">Each channel subunit contains six transmembrane segments (S1-S6) with S1-S4 forming one voltage sensing domain (VSD) and S5-S6 contributing to form one quarter of an interlocking pore-forming domain (PD).</text>
</comment>
<comment type="domain">
    <text evidence="1">The segment S6 is involved in the inhibition of voltage-gated potassium channel activity by KCNE4.</text>
</comment>
<comment type="domain">
    <text evidence="1">The CALM binding domains correspond to the first two membrane-proximal helical regions that interact with a single calmodulin/CALM molecule forming a clamp-like structure. Binding of CALM C-terminus to the first helix is calcium-independent and is essential for assembly of the structure. Binding of CALM N-terminus to the second helix is calcium-dependent and regulates electrophysiological activity of the channel.</text>
</comment>
<comment type="domain">
    <text evidence="1">The C-terminal assembly domain carries the major determinants of tetramerization and subunit assembly specificity. Its coiled-coil region is four-stranded.</text>
</comment>
<comment type="similarity">
    <text evidence="6">Belongs to the potassium channel family. KQT (TC 1.A.1.15) subfamily. Kv7.1/KCNQ1 sub-subfamily.</text>
</comment>